<feature type="transit peptide" description="Mitochondrion" evidence="4">
    <location>
        <begin position="1"/>
        <end position="48"/>
    </location>
</feature>
<feature type="chain" id="PRO_0000019917" description="Endonuclease G, mitochondrial">
    <location>
        <begin position="49"/>
        <end position="299"/>
    </location>
</feature>
<feature type="region of interest" description="Essential for deoxyribonuclease activity" evidence="1">
    <location>
        <begin position="288"/>
        <end position="298"/>
    </location>
</feature>
<feature type="active site" description="Proton acceptor" evidence="3">
    <location>
        <position position="143"/>
    </location>
</feature>
<feature type="binding site" evidence="1">
    <location>
        <position position="174"/>
    </location>
    <ligand>
        <name>Mg(2+)</name>
        <dbReference type="ChEBI" id="CHEBI:18420"/>
        <note>catalytic</note>
    </ligand>
</feature>
<feature type="site" description="Essential for catalytic activity" evidence="1">
    <location>
        <position position="112"/>
    </location>
</feature>
<feature type="modified residue" description="Phosphothreonine" evidence="2">
    <location>
        <position position="130"/>
    </location>
</feature>
<feature type="modified residue" description="Phosphoserine" evidence="2">
    <location>
        <position position="290"/>
    </location>
</feature>
<feature type="disulfide bond" description="Interchain" evidence="1">
    <location>
        <position position="115"/>
    </location>
</feature>
<feature type="sequence conflict" description="In Ref. 4; AA sequence." evidence="5" ref="4">
    <original>H</original>
    <variation>S</variation>
    <location>
        <position position="172"/>
    </location>
</feature>
<feature type="sequence conflict" description="In Ref. 4; AA sequence." evidence="5" ref="4">
    <original>H</original>
    <variation>S</variation>
    <location>
        <position position="264"/>
    </location>
</feature>
<sequence>MQLLRAGLTLALGAGLGAAAESWWRQRADARATPGLLSRLPVLPVAAAAGLPAVPGAPAGGGPGELAKYGLPGVAQLKSRASYVLCYDPRTRGALWVVEQLRPEGLRGDGNRSSCDFHEDDSVHAYHRATNADYRGSGFDRGHLAAAANHRWSQKAMDDTFYLSNVAPQVPHLNQNAWNNLEKYSRSLTRTYQNVYVCTGPLFLPRTEADGKSYVKYQVIGKNHVAVPTHFFKVLILEAAGGQIELRSYVMPNAPVDEAIPLEHFLVPIESIERASGLLFVPNILARAGSLKAITAGSK</sequence>
<reference key="1">
    <citation type="journal article" date="1993" name="Science">
        <title>Primers for mitochondrial DNA replication generated by endonuclease G.</title>
        <authorList>
            <person name="Cote J."/>
            <person name="Ruiz-Carrillo A."/>
        </authorList>
    </citation>
    <scope>NUCLEOTIDE SEQUENCE [MRNA]</scope>
    <source>
        <tissue>Liver</tissue>
    </source>
</reference>
<reference key="2">
    <citation type="submission" date="2007-03" db="EMBL/GenBank/DDBJ databases">
        <authorList>
            <consortium name="NIH - Mammalian Gene Collection (MGC) project"/>
        </authorList>
    </citation>
    <scope>NUCLEOTIDE SEQUENCE [LARGE SCALE MRNA]</scope>
    <source>
        <strain>Hereford</strain>
        <tissue>Basal ganglia</tissue>
    </source>
</reference>
<reference key="3">
    <citation type="journal article" date="1988" name="J. Biol. Chem.">
        <title>Reproducible high yield sequencing of proteins electrophoretically separated and transferred to an inert support.</title>
        <authorList>
            <person name="Moos M. Jr."/>
            <person name="Nguyen N.Y."/>
            <person name="Liu T.-Y."/>
        </authorList>
    </citation>
    <scope>PROTEIN SEQUENCE OF 49-75</scope>
    <source>
        <tissue>Liver</tissue>
        <tissue>Thymus</tissue>
    </source>
</reference>
<reference key="4">
    <citation type="journal article" date="1995" name="Nucleic Acids Res.">
        <title>Endonuclease G from mammalian nuclei is identical to the major endonuclease of mitochondria.</title>
        <authorList>
            <person name="Gerschenson M."/>
            <person name="Houmiel K.L."/>
            <person name="Low R.L."/>
        </authorList>
    </citation>
    <scope>PARTIAL PROTEIN SEQUENCE</scope>
    <scope>CHARACTERIZATION</scope>
    <source>
        <tissue>Heart</tissue>
    </source>
</reference>
<evidence type="ECO:0000250" key="1">
    <source>
        <dbReference type="UniProtKB" id="O08600"/>
    </source>
</evidence>
<evidence type="ECO:0000250" key="2">
    <source>
        <dbReference type="UniProtKB" id="Q14249"/>
    </source>
</evidence>
<evidence type="ECO:0000255" key="3">
    <source>
        <dbReference type="PROSITE-ProRule" id="PRU10047"/>
    </source>
</evidence>
<evidence type="ECO:0000269" key="4">
    <source>
    </source>
</evidence>
<evidence type="ECO:0000305" key="5"/>
<dbReference type="EC" id="3.1.30.-"/>
<dbReference type="EMBL" id="X72802">
    <property type="protein sequence ID" value="CAA51320.1"/>
    <property type="molecule type" value="mRNA"/>
</dbReference>
<dbReference type="EMBL" id="BC134634">
    <property type="protein sequence ID" value="AAI34635.1"/>
    <property type="molecule type" value="mRNA"/>
</dbReference>
<dbReference type="RefSeq" id="NP_787017.1">
    <property type="nucleotide sequence ID" value="NM_175823.3"/>
</dbReference>
<dbReference type="SMR" id="P38447"/>
<dbReference type="FunCoup" id="P38447">
    <property type="interactions" value="536"/>
</dbReference>
<dbReference type="STRING" id="9913.ENSBTAP00000016564"/>
<dbReference type="PaxDb" id="9913-ENSBTAP00000016564"/>
<dbReference type="GeneID" id="327707"/>
<dbReference type="KEGG" id="bta:327707"/>
<dbReference type="CTD" id="2021"/>
<dbReference type="eggNOG" id="KOG3721">
    <property type="taxonomic scope" value="Eukaryota"/>
</dbReference>
<dbReference type="HOGENOM" id="CLU_055174_0_1_1"/>
<dbReference type="InParanoid" id="P38447"/>
<dbReference type="OrthoDB" id="5418055at2759"/>
<dbReference type="TreeFam" id="TF105386"/>
<dbReference type="Proteomes" id="UP000009136">
    <property type="component" value="Unplaced"/>
</dbReference>
<dbReference type="GO" id="GO:0005743">
    <property type="term" value="C:mitochondrial inner membrane"/>
    <property type="evidence" value="ECO:0000318"/>
    <property type="project" value="GO_Central"/>
</dbReference>
<dbReference type="GO" id="GO:0005739">
    <property type="term" value="C:mitochondrion"/>
    <property type="evidence" value="ECO:0000314"/>
    <property type="project" value="UniProtKB"/>
</dbReference>
<dbReference type="GO" id="GO:0005634">
    <property type="term" value="C:nucleus"/>
    <property type="evidence" value="ECO:0000318"/>
    <property type="project" value="GO_Central"/>
</dbReference>
<dbReference type="GO" id="GO:0004520">
    <property type="term" value="F:DNA endonuclease activity"/>
    <property type="evidence" value="ECO:0000250"/>
    <property type="project" value="UniProtKB"/>
</dbReference>
<dbReference type="GO" id="GO:0000287">
    <property type="term" value="F:magnesium ion binding"/>
    <property type="evidence" value="ECO:0000250"/>
    <property type="project" value="UniProtKB"/>
</dbReference>
<dbReference type="GO" id="GO:0003676">
    <property type="term" value="F:nucleic acid binding"/>
    <property type="evidence" value="ECO:0007669"/>
    <property type="project" value="InterPro"/>
</dbReference>
<dbReference type="GO" id="GO:0042803">
    <property type="term" value="F:protein homodimerization activity"/>
    <property type="evidence" value="ECO:0000250"/>
    <property type="project" value="UniProtKB"/>
</dbReference>
<dbReference type="GO" id="GO:0004521">
    <property type="term" value="F:RNA endonuclease activity"/>
    <property type="evidence" value="ECO:0000318"/>
    <property type="project" value="GO_Central"/>
</dbReference>
<dbReference type="GO" id="GO:0000014">
    <property type="term" value="F:single-stranded DNA endodeoxyribonuclease activity"/>
    <property type="evidence" value="ECO:0000318"/>
    <property type="project" value="GO_Central"/>
</dbReference>
<dbReference type="GO" id="GO:0006309">
    <property type="term" value="P:apoptotic DNA fragmentation"/>
    <property type="evidence" value="ECO:0000318"/>
    <property type="project" value="GO_Central"/>
</dbReference>
<dbReference type="GO" id="GO:0006974">
    <property type="term" value="P:DNA damage response"/>
    <property type="evidence" value="ECO:0000250"/>
    <property type="project" value="UniProtKB"/>
</dbReference>
<dbReference type="GO" id="GO:0032043">
    <property type="term" value="P:mitochondrial DNA catabolic process"/>
    <property type="evidence" value="ECO:0000250"/>
    <property type="project" value="UniProtKB"/>
</dbReference>
<dbReference type="GO" id="GO:0032007">
    <property type="term" value="P:negative regulation of TOR signaling"/>
    <property type="evidence" value="ECO:0000250"/>
    <property type="project" value="UniProtKB"/>
</dbReference>
<dbReference type="GO" id="GO:0010508">
    <property type="term" value="P:positive regulation of autophagy"/>
    <property type="evidence" value="ECO:0000250"/>
    <property type="project" value="UniProtKB"/>
</dbReference>
<dbReference type="GO" id="GO:0090297">
    <property type="term" value="P:positive regulation of mitochondrial DNA replication"/>
    <property type="evidence" value="ECO:0000250"/>
    <property type="project" value="UniProtKB"/>
</dbReference>
<dbReference type="CDD" id="cd00091">
    <property type="entry name" value="NUC"/>
    <property type="match status" value="1"/>
</dbReference>
<dbReference type="FunFam" id="3.40.570.10:FF:000002">
    <property type="entry name" value="Endonuclease G, mitochondrial"/>
    <property type="match status" value="1"/>
</dbReference>
<dbReference type="Gene3D" id="3.40.570.10">
    <property type="entry name" value="Extracellular Endonuclease, subunit A"/>
    <property type="match status" value="1"/>
</dbReference>
<dbReference type="InterPro" id="IPR018524">
    <property type="entry name" value="DNA/RNA_endonuclease_AS"/>
</dbReference>
<dbReference type="InterPro" id="IPR044929">
    <property type="entry name" value="DNA/RNA_non-sp_Endonuclease_sf"/>
</dbReference>
<dbReference type="InterPro" id="IPR001604">
    <property type="entry name" value="Endo_G_ENPP1-like_dom"/>
</dbReference>
<dbReference type="InterPro" id="IPR020821">
    <property type="entry name" value="ENPP1-3/EXOG-like_nuc-like"/>
</dbReference>
<dbReference type="InterPro" id="IPR044925">
    <property type="entry name" value="His-Me_finger_sf"/>
</dbReference>
<dbReference type="InterPro" id="IPR040255">
    <property type="entry name" value="Non-specific_endonuclease"/>
</dbReference>
<dbReference type="PANTHER" id="PTHR13966:SF5">
    <property type="entry name" value="ENDONUCLEASE G, MITOCHONDRIAL"/>
    <property type="match status" value="1"/>
</dbReference>
<dbReference type="PANTHER" id="PTHR13966">
    <property type="entry name" value="ENDONUCLEASE RELATED"/>
    <property type="match status" value="1"/>
</dbReference>
<dbReference type="Pfam" id="PF01223">
    <property type="entry name" value="Endonuclease_NS"/>
    <property type="match status" value="1"/>
</dbReference>
<dbReference type="SMART" id="SM00892">
    <property type="entry name" value="Endonuclease_NS"/>
    <property type="match status" value="1"/>
</dbReference>
<dbReference type="SMART" id="SM00477">
    <property type="entry name" value="NUC"/>
    <property type="match status" value="1"/>
</dbReference>
<dbReference type="SUPFAM" id="SSF54060">
    <property type="entry name" value="His-Me finger endonucleases"/>
    <property type="match status" value="1"/>
</dbReference>
<dbReference type="PROSITE" id="PS01070">
    <property type="entry name" value="NUCLEASE_NON_SPEC"/>
    <property type="match status" value="1"/>
</dbReference>
<name>NUCG_BOVIN</name>
<organism>
    <name type="scientific">Bos taurus</name>
    <name type="common">Bovine</name>
    <dbReference type="NCBI Taxonomy" id="9913"/>
    <lineage>
        <taxon>Eukaryota</taxon>
        <taxon>Metazoa</taxon>
        <taxon>Chordata</taxon>
        <taxon>Craniata</taxon>
        <taxon>Vertebrata</taxon>
        <taxon>Euteleostomi</taxon>
        <taxon>Mammalia</taxon>
        <taxon>Eutheria</taxon>
        <taxon>Laurasiatheria</taxon>
        <taxon>Artiodactyla</taxon>
        <taxon>Ruminantia</taxon>
        <taxon>Pecora</taxon>
        <taxon>Bovidae</taxon>
        <taxon>Bovinae</taxon>
        <taxon>Bos</taxon>
    </lineage>
</organism>
<gene>
    <name type="primary">ENDOG</name>
</gene>
<keyword id="KW-0903">Direct protein sequencing</keyword>
<keyword id="KW-1015">Disulfide bond</keyword>
<keyword id="KW-0255">Endonuclease</keyword>
<keyword id="KW-0378">Hydrolase</keyword>
<keyword id="KW-0460">Magnesium</keyword>
<keyword id="KW-0464">Manganese</keyword>
<keyword id="KW-0479">Metal-binding</keyword>
<keyword id="KW-0496">Mitochondrion</keyword>
<keyword id="KW-0540">Nuclease</keyword>
<keyword id="KW-0597">Phosphoprotein</keyword>
<keyword id="KW-1185">Reference proteome</keyword>
<keyword id="KW-0809">Transit peptide</keyword>
<protein>
    <recommendedName>
        <fullName>Endonuclease G, mitochondrial</fullName>
        <shortName>Endo G</shortName>
        <ecNumber>3.1.30.-</ecNumber>
    </recommendedName>
</protein>
<comment type="function">
    <text evidence="1 2">Endonuclease that preferentially catalyzes the cleavage of double-stranded 5-hydroxymethylcytosine (5hmC)-modified DNA (By similarity). The 5hmC-modified nucleotide does not increase the binding affinity, but instead increases the efficiency of cutting and specifies the site of cleavage for the modified DNAs (By similarity). Shows significantly higher affinity for four- stranded Holliday junction over duplex and single-stranded DNAs (By similarity). Promotes conservative recombination when the DNA is 5hmC-modified (By similarity). Promotes autophagy through the suppression of mTOR by its phosphorylation-mediated interaction with YWHAG and its endonuclease activity-mediated DNA damage response (By similarity). GSK3-beta mediated phosphorylation of ENDOG enhances its interaction with YWHAG, leading to the release of TSC2 and PIK3C3 from YWHAG resulting in mTOR pathway suppression and autophagy initiation (By similarity). Promotes cleavage of mtDNA in response to oxidative and nitrosative stress, in turn inducing compensatory mtDNA replication (By similarity).</text>
</comment>
<comment type="cofactor">
    <cofactor evidence="1">
        <name>Mg(2+)</name>
        <dbReference type="ChEBI" id="CHEBI:18420"/>
    </cofactor>
</comment>
<comment type="subunit">
    <text evidence="2">Homodimer; disulfide-linked (By similarity). Homodimerization is essential for its activity (By similarity). Interacts with YWHAG (By similarity).</text>
</comment>
<comment type="subcellular location">
    <subcellularLocation>
        <location evidence="2">Mitochondrion</location>
    </subcellularLocation>
</comment>
<comment type="PTM">
    <text evidence="2">GSK3-beta-mediated dual phosphorylations at Thr-130 and Ser-290 is necessary for its interaction with YWHAG and the induction of autophagy.</text>
</comment>
<comment type="similarity">
    <text evidence="5">Belongs to the DNA/RNA non-specific endonuclease family.</text>
</comment>
<proteinExistence type="evidence at protein level"/>
<accession>P38447</accession>
<accession>A4IFL3</accession>